<comment type="function">
    <text evidence="1">Catalyzes the pyruvoyl-dependent decarboxylation of aspartate to produce beta-alanine.</text>
</comment>
<comment type="catalytic activity">
    <reaction evidence="1">
        <text>L-aspartate + H(+) = beta-alanine + CO2</text>
        <dbReference type="Rhea" id="RHEA:19497"/>
        <dbReference type="ChEBI" id="CHEBI:15378"/>
        <dbReference type="ChEBI" id="CHEBI:16526"/>
        <dbReference type="ChEBI" id="CHEBI:29991"/>
        <dbReference type="ChEBI" id="CHEBI:57966"/>
        <dbReference type="EC" id="4.1.1.11"/>
    </reaction>
</comment>
<comment type="cofactor">
    <cofactor evidence="1">
        <name>pyruvate</name>
        <dbReference type="ChEBI" id="CHEBI:15361"/>
    </cofactor>
    <text evidence="1">Binds 1 pyruvoyl group covalently per subunit.</text>
</comment>
<comment type="pathway">
    <text evidence="1">Cofactor biosynthesis; (R)-pantothenate biosynthesis; beta-alanine from L-aspartate: step 1/1.</text>
</comment>
<comment type="subunit">
    <text evidence="1">Heterooctamer of four alpha and four beta subunits.</text>
</comment>
<comment type="subcellular location">
    <subcellularLocation>
        <location evidence="1">Cytoplasm</location>
    </subcellularLocation>
</comment>
<comment type="PTM">
    <text evidence="1">Is synthesized initially as an inactive proenzyme, which is activated by self-cleavage at a specific serine bond to produce a beta-subunit with a hydroxyl group at its C-terminus and an alpha-subunit with a pyruvoyl group at its N-terminus.</text>
</comment>
<comment type="similarity">
    <text evidence="1">Belongs to the PanD family.</text>
</comment>
<feature type="chain" id="PRO_1000191922" description="Aspartate 1-decarboxylase beta chain" evidence="1">
    <location>
        <begin position="1"/>
        <end position="24"/>
    </location>
</feature>
<feature type="chain" id="PRO_1000191923" description="Aspartate 1-decarboxylase alpha chain" evidence="1">
    <location>
        <begin position="25"/>
        <end position="141"/>
    </location>
</feature>
<feature type="active site" description="Schiff-base intermediate with substrate; via pyruvic acid" evidence="1">
    <location>
        <position position="25"/>
    </location>
</feature>
<feature type="active site" description="Proton donor" evidence="1">
    <location>
        <position position="58"/>
    </location>
</feature>
<feature type="binding site" evidence="1">
    <location>
        <position position="57"/>
    </location>
    <ligand>
        <name>substrate</name>
    </ligand>
</feature>
<feature type="binding site" evidence="1">
    <location>
        <begin position="73"/>
        <end position="75"/>
    </location>
    <ligand>
        <name>substrate</name>
    </ligand>
</feature>
<feature type="modified residue" description="Pyruvic acid (Ser)" evidence="1">
    <location>
        <position position="25"/>
    </location>
</feature>
<gene>
    <name evidence="1" type="primary">panD</name>
    <name type="ordered locus">Achl_3676</name>
</gene>
<reference key="1">
    <citation type="submission" date="2009-01" db="EMBL/GenBank/DDBJ databases">
        <title>Complete sequence of chromosome of Arthrobacter chlorophenolicus A6.</title>
        <authorList>
            <consortium name="US DOE Joint Genome Institute"/>
            <person name="Lucas S."/>
            <person name="Copeland A."/>
            <person name="Lapidus A."/>
            <person name="Glavina del Rio T."/>
            <person name="Tice H."/>
            <person name="Bruce D."/>
            <person name="Goodwin L."/>
            <person name="Pitluck S."/>
            <person name="Goltsman E."/>
            <person name="Clum A."/>
            <person name="Larimer F."/>
            <person name="Land M."/>
            <person name="Hauser L."/>
            <person name="Kyrpides N."/>
            <person name="Mikhailova N."/>
            <person name="Jansson J."/>
            <person name="Richardson P."/>
        </authorList>
    </citation>
    <scope>NUCLEOTIDE SEQUENCE [LARGE SCALE GENOMIC DNA]</scope>
    <source>
        <strain>ATCC 700700 / DSM 12829 / CIP 107037 / JCM 12360 / KCTC 9906 / NCIMB 13794 / A6</strain>
    </source>
</reference>
<sequence>MNRTMFKSKIHRATVTHADLHYVGSVTVDLDLLEAADILPGELVSIVDITNGARLETYTIAGERGSGVIGINGAAAHLMHENDLVILITYAQMTTEEAKAYEPKVVHVDQDNRIIQLGNDPAEGIAPGMTRPPFALNNAAL</sequence>
<keyword id="KW-0068">Autocatalytic cleavage</keyword>
<keyword id="KW-0963">Cytoplasm</keyword>
<keyword id="KW-0210">Decarboxylase</keyword>
<keyword id="KW-0456">Lyase</keyword>
<keyword id="KW-0566">Pantothenate biosynthesis</keyword>
<keyword id="KW-0670">Pyruvate</keyword>
<keyword id="KW-0704">Schiff base</keyword>
<keyword id="KW-0865">Zymogen</keyword>
<dbReference type="EC" id="4.1.1.11" evidence="1"/>
<dbReference type="EMBL" id="CP001341">
    <property type="protein sequence ID" value="ACL41631.1"/>
    <property type="molecule type" value="Genomic_DNA"/>
</dbReference>
<dbReference type="RefSeq" id="WP_015938825.1">
    <property type="nucleotide sequence ID" value="NC_011886.1"/>
</dbReference>
<dbReference type="SMR" id="B8H729"/>
<dbReference type="STRING" id="452863.Achl_3676"/>
<dbReference type="KEGG" id="ach:Achl_3676"/>
<dbReference type="eggNOG" id="COG0853">
    <property type="taxonomic scope" value="Bacteria"/>
</dbReference>
<dbReference type="HOGENOM" id="CLU_115305_2_0_11"/>
<dbReference type="UniPathway" id="UPA00028">
    <property type="reaction ID" value="UER00002"/>
</dbReference>
<dbReference type="Proteomes" id="UP000002505">
    <property type="component" value="Chromosome"/>
</dbReference>
<dbReference type="GO" id="GO:0005829">
    <property type="term" value="C:cytosol"/>
    <property type="evidence" value="ECO:0007669"/>
    <property type="project" value="TreeGrafter"/>
</dbReference>
<dbReference type="GO" id="GO:0004068">
    <property type="term" value="F:aspartate 1-decarboxylase activity"/>
    <property type="evidence" value="ECO:0007669"/>
    <property type="project" value="UniProtKB-UniRule"/>
</dbReference>
<dbReference type="GO" id="GO:0006523">
    <property type="term" value="P:alanine biosynthetic process"/>
    <property type="evidence" value="ECO:0007669"/>
    <property type="project" value="InterPro"/>
</dbReference>
<dbReference type="GO" id="GO:0015940">
    <property type="term" value="P:pantothenate biosynthetic process"/>
    <property type="evidence" value="ECO:0007669"/>
    <property type="project" value="UniProtKB-UniRule"/>
</dbReference>
<dbReference type="CDD" id="cd06919">
    <property type="entry name" value="Asp_decarbox"/>
    <property type="match status" value="1"/>
</dbReference>
<dbReference type="Gene3D" id="2.40.40.20">
    <property type="match status" value="1"/>
</dbReference>
<dbReference type="HAMAP" id="MF_00446">
    <property type="entry name" value="PanD"/>
    <property type="match status" value="1"/>
</dbReference>
<dbReference type="InterPro" id="IPR009010">
    <property type="entry name" value="Asp_de-COase-like_dom_sf"/>
</dbReference>
<dbReference type="InterPro" id="IPR003190">
    <property type="entry name" value="Asp_decarbox"/>
</dbReference>
<dbReference type="NCBIfam" id="TIGR00223">
    <property type="entry name" value="panD"/>
    <property type="match status" value="1"/>
</dbReference>
<dbReference type="PANTHER" id="PTHR21012">
    <property type="entry name" value="ASPARTATE 1-DECARBOXYLASE"/>
    <property type="match status" value="1"/>
</dbReference>
<dbReference type="PANTHER" id="PTHR21012:SF0">
    <property type="entry name" value="ASPARTATE 1-DECARBOXYLASE"/>
    <property type="match status" value="1"/>
</dbReference>
<dbReference type="Pfam" id="PF02261">
    <property type="entry name" value="Asp_decarbox"/>
    <property type="match status" value="1"/>
</dbReference>
<dbReference type="PIRSF" id="PIRSF006246">
    <property type="entry name" value="Asp_decarbox"/>
    <property type="match status" value="1"/>
</dbReference>
<dbReference type="SUPFAM" id="SSF50692">
    <property type="entry name" value="ADC-like"/>
    <property type="match status" value="1"/>
</dbReference>
<name>PAND_PSECP</name>
<proteinExistence type="inferred from homology"/>
<evidence type="ECO:0000255" key="1">
    <source>
        <dbReference type="HAMAP-Rule" id="MF_00446"/>
    </source>
</evidence>
<organism>
    <name type="scientific">Pseudarthrobacter chlorophenolicus (strain ATCC 700700 / DSM 12829 / CIP 107037 / JCM 12360 / KCTC 9906 / NCIMB 13794 / A6)</name>
    <name type="common">Arthrobacter chlorophenolicus</name>
    <dbReference type="NCBI Taxonomy" id="452863"/>
    <lineage>
        <taxon>Bacteria</taxon>
        <taxon>Bacillati</taxon>
        <taxon>Actinomycetota</taxon>
        <taxon>Actinomycetes</taxon>
        <taxon>Micrococcales</taxon>
        <taxon>Micrococcaceae</taxon>
        <taxon>Pseudarthrobacter</taxon>
    </lineage>
</organism>
<accession>B8H729</accession>
<protein>
    <recommendedName>
        <fullName evidence="1">Aspartate 1-decarboxylase</fullName>
        <ecNumber evidence="1">4.1.1.11</ecNumber>
    </recommendedName>
    <alternativeName>
        <fullName evidence="1">Aspartate alpha-decarboxylase</fullName>
    </alternativeName>
    <component>
        <recommendedName>
            <fullName evidence="1">Aspartate 1-decarboxylase beta chain</fullName>
        </recommendedName>
    </component>
    <component>
        <recommendedName>
            <fullName evidence="1">Aspartate 1-decarboxylase alpha chain</fullName>
        </recommendedName>
    </component>
</protein>